<keyword id="KW-0687">Ribonucleoprotein</keyword>
<keyword id="KW-0689">Ribosomal protein</keyword>
<keyword id="KW-0694">RNA-binding</keyword>
<keyword id="KW-0699">rRNA-binding</keyword>
<comment type="function">
    <text evidence="1">Binds to 23S rRNA. Forms part of two intersubunit bridges in the 70S ribosome.</text>
</comment>
<comment type="subunit">
    <text evidence="1">Part of the 50S ribosomal subunit. Forms a cluster with proteins L3 and L19. In the 70S ribosome, L14 and L19 interact and together make contacts with the 16S rRNA in bridges B5 and B8.</text>
</comment>
<comment type="similarity">
    <text evidence="1">Belongs to the universal ribosomal protein uL14 family.</text>
</comment>
<proteinExistence type="inferred from homology"/>
<feature type="chain" id="PRO_0000266503" description="Large ribosomal subunit protein uL14">
    <location>
        <begin position="1"/>
        <end position="122"/>
    </location>
</feature>
<name>RL14_CHESB</name>
<reference key="1">
    <citation type="submission" date="2006-06" db="EMBL/GenBank/DDBJ databases">
        <title>Complete sequence of chromosome of Mesorhizobium sp. BNC1.</title>
        <authorList>
            <consortium name="US DOE Joint Genome Institute"/>
            <person name="Copeland A."/>
            <person name="Lucas S."/>
            <person name="Lapidus A."/>
            <person name="Barry K."/>
            <person name="Detter J.C."/>
            <person name="Glavina del Rio T."/>
            <person name="Hammon N."/>
            <person name="Israni S."/>
            <person name="Dalin E."/>
            <person name="Tice H."/>
            <person name="Pitluck S."/>
            <person name="Chertkov O."/>
            <person name="Brettin T."/>
            <person name="Bruce D."/>
            <person name="Han C."/>
            <person name="Tapia R."/>
            <person name="Gilna P."/>
            <person name="Schmutz J."/>
            <person name="Larimer F."/>
            <person name="Land M."/>
            <person name="Hauser L."/>
            <person name="Kyrpides N."/>
            <person name="Mikhailova N."/>
            <person name="Richardson P."/>
        </authorList>
    </citation>
    <scope>NUCLEOTIDE SEQUENCE [LARGE SCALE GENOMIC DNA]</scope>
    <source>
        <strain>BNC1</strain>
    </source>
</reference>
<sequence>MIQMQTNLDVADNSGARRVMCIKVLGGSKRKYASVGDIIVVSVKEAIPRGRVKKGDVMKAVVVRTAKDIRRPDGSVIRFDSNAAVLVDNKREPIGTRIFGPVPRELRAKNHMKIISLAPEVL</sequence>
<protein>
    <recommendedName>
        <fullName evidence="1">Large ribosomal subunit protein uL14</fullName>
    </recommendedName>
    <alternativeName>
        <fullName evidence="2">50S ribosomal protein L14</fullName>
    </alternativeName>
</protein>
<gene>
    <name evidence="1" type="primary">rplN</name>
    <name type="ordered locus">Meso_1668</name>
</gene>
<evidence type="ECO:0000255" key="1">
    <source>
        <dbReference type="HAMAP-Rule" id="MF_01367"/>
    </source>
</evidence>
<evidence type="ECO:0000305" key="2"/>
<organism>
    <name type="scientific">Chelativorans sp. (strain BNC1)</name>
    <dbReference type="NCBI Taxonomy" id="266779"/>
    <lineage>
        <taxon>Bacteria</taxon>
        <taxon>Pseudomonadati</taxon>
        <taxon>Pseudomonadota</taxon>
        <taxon>Alphaproteobacteria</taxon>
        <taxon>Hyphomicrobiales</taxon>
        <taxon>Phyllobacteriaceae</taxon>
        <taxon>Chelativorans</taxon>
    </lineage>
</organism>
<dbReference type="EMBL" id="CP000390">
    <property type="protein sequence ID" value="ABG63063.1"/>
    <property type="molecule type" value="Genomic_DNA"/>
</dbReference>
<dbReference type="SMR" id="Q11HR2"/>
<dbReference type="STRING" id="266779.Meso_1668"/>
<dbReference type="KEGG" id="mes:Meso_1668"/>
<dbReference type="eggNOG" id="COG0093">
    <property type="taxonomic scope" value="Bacteria"/>
</dbReference>
<dbReference type="HOGENOM" id="CLU_095071_2_1_5"/>
<dbReference type="OrthoDB" id="9806379at2"/>
<dbReference type="GO" id="GO:0022625">
    <property type="term" value="C:cytosolic large ribosomal subunit"/>
    <property type="evidence" value="ECO:0007669"/>
    <property type="project" value="TreeGrafter"/>
</dbReference>
<dbReference type="GO" id="GO:0070180">
    <property type="term" value="F:large ribosomal subunit rRNA binding"/>
    <property type="evidence" value="ECO:0007669"/>
    <property type="project" value="TreeGrafter"/>
</dbReference>
<dbReference type="GO" id="GO:0003735">
    <property type="term" value="F:structural constituent of ribosome"/>
    <property type="evidence" value="ECO:0007669"/>
    <property type="project" value="InterPro"/>
</dbReference>
<dbReference type="GO" id="GO:0006412">
    <property type="term" value="P:translation"/>
    <property type="evidence" value="ECO:0007669"/>
    <property type="project" value="UniProtKB-UniRule"/>
</dbReference>
<dbReference type="CDD" id="cd00337">
    <property type="entry name" value="Ribosomal_uL14"/>
    <property type="match status" value="1"/>
</dbReference>
<dbReference type="FunFam" id="2.40.150.20:FF:000001">
    <property type="entry name" value="50S ribosomal protein L14"/>
    <property type="match status" value="1"/>
</dbReference>
<dbReference type="Gene3D" id="2.40.150.20">
    <property type="entry name" value="Ribosomal protein L14"/>
    <property type="match status" value="1"/>
</dbReference>
<dbReference type="HAMAP" id="MF_01367">
    <property type="entry name" value="Ribosomal_uL14"/>
    <property type="match status" value="1"/>
</dbReference>
<dbReference type="InterPro" id="IPR000218">
    <property type="entry name" value="Ribosomal_uL14"/>
</dbReference>
<dbReference type="InterPro" id="IPR005745">
    <property type="entry name" value="Ribosomal_uL14_bac-type"/>
</dbReference>
<dbReference type="InterPro" id="IPR019972">
    <property type="entry name" value="Ribosomal_uL14_CS"/>
</dbReference>
<dbReference type="InterPro" id="IPR036853">
    <property type="entry name" value="Ribosomal_uL14_sf"/>
</dbReference>
<dbReference type="NCBIfam" id="TIGR01067">
    <property type="entry name" value="rplN_bact"/>
    <property type="match status" value="1"/>
</dbReference>
<dbReference type="PANTHER" id="PTHR11761">
    <property type="entry name" value="50S/60S RIBOSOMAL PROTEIN L14/L23"/>
    <property type="match status" value="1"/>
</dbReference>
<dbReference type="PANTHER" id="PTHR11761:SF3">
    <property type="entry name" value="LARGE RIBOSOMAL SUBUNIT PROTEIN UL14M"/>
    <property type="match status" value="1"/>
</dbReference>
<dbReference type="Pfam" id="PF00238">
    <property type="entry name" value="Ribosomal_L14"/>
    <property type="match status" value="1"/>
</dbReference>
<dbReference type="SMART" id="SM01374">
    <property type="entry name" value="Ribosomal_L14"/>
    <property type="match status" value="1"/>
</dbReference>
<dbReference type="SUPFAM" id="SSF50193">
    <property type="entry name" value="Ribosomal protein L14"/>
    <property type="match status" value="1"/>
</dbReference>
<dbReference type="PROSITE" id="PS00049">
    <property type="entry name" value="RIBOSOMAL_L14"/>
    <property type="match status" value="1"/>
</dbReference>
<accession>Q11HR2</accession>